<sequence length="368" mass="40294">MATNNIVVLGAGVSGLTTAWLLSKDPSNKITVAAKHMPGDYDIEYCSPWAGANYLPVGAENSRVGQWERATWPHLRDIAQNHPEAGIHFQDTVVYNRTKDQGSTTGQWFSELVKPNPWYGKVLPNFRELSKDELPPGIDNANRFTSVCINTAVYLPWLVGQCRKNGVVFKRAVFKHVAEAANAHHSGQKADLVVNCTGLSSRKLGGVQDNTLLPARGQIVVVRNDPGLMCSISGTDDGDDEVTYMMTRAAGGGTILGGTYQKHNWDSLPDPNLAVRIMKRCIELCPSLVAPGQGIEGLDIIRHGVGLRPVREDGPRIEKELIDGVWVVHNYGHGGYGYQTSFGCATTAVEVVREALQQQKQRRDKARL</sequence>
<comment type="function">
    <text evidence="2 5">Catalyzes the oxidative deamination of D-amino acids with broad substrate specificity (PubMed:31420577). Enables the organism to utilize D-amino acids as a source of nutrients (By similarity). Unusually, has high activity on D-glutamate (PubMed:31420577).</text>
</comment>
<comment type="catalytic activity">
    <reaction evidence="5">
        <text>a D-alpha-amino acid + O2 + H2O = a 2-oxocarboxylate + H2O2 + NH4(+)</text>
        <dbReference type="Rhea" id="RHEA:21816"/>
        <dbReference type="ChEBI" id="CHEBI:15377"/>
        <dbReference type="ChEBI" id="CHEBI:15379"/>
        <dbReference type="ChEBI" id="CHEBI:16240"/>
        <dbReference type="ChEBI" id="CHEBI:28938"/>
        <dbReference type="ChEBI" id="CHEBI:35179"/>
        <dbReference type="ChEBI" id="CHEBI:59871"/>
        <dbReference type="EC" id="1.4.3.3"/>
    </reaction>
    <physiologicalReaction direction="left-to-right" evidence="5">
        <dbReference type="Rhea" id="RHEA:21817"/>
    </physiologicalReaction>
</comment>
<comment type="catalytic activity">
    <reaction evidence="5">
        <text>D-alanine + O2 + H2O = pyruvate + H2O2 + NH4(+)</text>
        <dbReference type="Rhea" id="RHEA:22688"/>
        <dbReference type="ChEBI" id="CHEBI:15361"/>
        <dbReference type="ChEBI" id="CHEBI:15377"/>
        <dbReference type="ChEBI" id="CHEBI:15379"/>
        <dbReference type="ChEBI" id="CHEBI:16240"/>
        <dbReference type="ChEBI" id="CHEBI:28938"/>
        <dbReference type="ChEBI" id="CHEBI:57416"/>
    </reaction>
    <physiologicalReaction direction="left-to-right" evidence="5">
        <dbReference type="Rhea" id="RHEA:22689"/>
    </physiologicalReaction>
</comment>
<comment type="catalytic activity">
    <reaction evidence="5">
        <text>D-glutamate + O2 + H2O = H2O2 + 2-oxoglutarate + NH4(+)</text>
        <dbReference type="Rhea" id="RHEA:10028"/>
        <dbReference type="ChEBI" id="CHEBI:15377"/>
        <dbReference type="ChEBI" id="CHEBI:15379"/>
        <dbReference type="ChEBI" id="CHEBI:16240"/>
        <dbReference type="ChEBI" id="CHEBI:16810"/>
        <dbReference type="ChEBI" id="CHEBI:28938"/>
        <dbReference type="ChEBI" id="CHEBI:29986"/>
    </reaction>
    <physiologicalReaction direction="left-to-right" evidence="5">
        <dbReference type="Rhea" id="RHEA:10029"/>
    </physiologicalReaction>
</comment>
<comment type="catalytic activity">
    <reaction evidence="5">
        <text>D-serine + O2 + H2O = 3-hydroxypyruvate + H2O2 + NH4(+)</text>
        <dbReference type="Rhea" id="RHEA:70951"/>
        <dbReference type="ChEBI" id="CHEBI:15377"/>
        <dbReference type="ChEBI" id="CHEBI:15379"/>
        <dbReference type="ChEBI" id="CHEBI:16240"/>
        <dbReference type="ChEBI" id="CHEBI:17180"/>
        <dbReference type="ChEBI" id="CHEBI:28938"/>
        <dbReference type="ChEBI" id="CHEBI:35247"/>
    </reaction>
    <physiologicalReaction direction="left-to-right" evidence="5">
        <dbReference type="Rhea" id="RHEA:70952"/>
    </physiologicalReaction>
</comment>
<comment type="catalytic activity">
    <reaction evidence="5">
        <text>D-phenylalanine + O2 + H2O = 3-phenylpyruvate + H2O2 + NH4(+)</text>
        <dbReference type="Rhea" id="RHEA:70963"/>
        <dbReference type="ChEBI" id="CHEBI:15377"/>
        <dbReference type="ChEBI" id="CHEBI:15379"/>
        <dbReference type="ChEBI" id="CHEBI:16240"/>
        <dbReference type="ChEBI" id="CHEBI:18005"/>
        <dbReference type="ChEBI" id="CHEBI:28938"/>
        <dbReference type="ChEBI" id="CHEBI:57981"/>
    </reaction>
    <physiologicalReaction direction="left-to-right" evidence="5">
        <dbReference type="Rhea" id="RHEA:70964"/>
    </physiologicalReaction>
</comment>
<comment type="catalytic activity">
    <reaction evidence="5">
        <text>D-arginine + O2 + H2O = 5-guanidino-2-oxopentanoate + H2O2 + NH4(+)</text>
        <dbReference type="Rhea" id="RHEA:78219"/>
        <dbReference type="ChEBI" id="CHEBI:15377"/>
        <dbReference type="ChEBI" id="CHEBI:15379"/>
        <dbReference type="ChEBI" id="CHEBI:16240"/>
        <dbReference type="ChEBI" id="CHEBI:28938"/>
        <dbReference type="ChEBI" id="CHEBI:32689"/>
        <dbReference type="ChEBI" id="CHEBI:58489"/>
    </reaction>
    <physiologicalReaction direction="left-to-right" evidence="5">
        <dbReference type="Rhea" id="RHEA:78220"/>
    </physiologicalReaction>
</comment>
<comment type="catalytic activity">
    <reaction evidence="5">
        <text>D-methionine + O2 + H2O = 4-methylsulfanyl-2-oxobutanoate + H2O2 + NH4(+)</text>
        <dbReference type="Rhea" id="RHEA:78207"/>
        <dbReference type="ChEBI" id="CHEBI:15377"/>
        <dbReference type="ChEBI" id="CHEBI:15379"/>
        <dbReference type="ChEBI" id="CHEBI:16240"/>
        <dbReference type="ChEBI" id="CHEBI:16723"/>
        <dbReference type="ChEBI" id="CHEBI:28938"/>
        <dbReference type="ChEBI" id="CHEBI:57932"/>
    </reaction>
    <physiologicalReaction direction="left-to-right" evidence="5">
        <dbReference type="Rhea" id="RHEA:78208"/>
    </physiologicalReaction>
</comment>
<comment type="catalytic activity">
    <reaction evidence="5">
        <text>D-leucine + O2 + H2O = 4-methyl-2-oxopentanoate + H2O2 + NH4(+)</text>
        <dbReference type="Rhea" id="RHEA:78211"/>
        <dbReference type="ChEBI" id="CHEBI:15377"/>
        <dbReference type="ChEBI" id="CHEBI:15379"/>
        <dbReference type="ChEBI" id="CHEBI:16240"/>
        <dbReference type="ChEBI" id="CHEBI:17865"/>
        <dbReference type="ChEBI" id="CHEBI:28938"/>
        <dbReference type="ChEBI" id="CHEBI:143079"/>
    </reaction>
    <physiologicalReaction direction="left-to-right" evidence="5">
        <dbReference type="Rhea" id="RHEA:78212"/>
    </physiologicalReaction>
</comment>
<comment type="catalytic activity">
    <reaction evidence="5">
        <text>D-lysine + O2 + H2O = 6-amino-2-oxohexanoate + H2O2 + NH4(+)</text>
        <dbReference type="Rhea" id="RHEA:37583"/>
        <dbReference type="ChEBI" id="CHEBI:15377"/>
        <dbReference type="ChEBI" id="CHEBI:15379"/>
        <dbReference type="ChEBI" id="CHEBI:16240"/>
        <dbReference type="ChEBI" id="CHEBI:28938"/>
        <dbReference type="ChEBI" id="CHEBI:32557"/>
        <dbReference type="ChEBI" id="CHEBI:58183"/>
        <dbReference type="EC" id="1.4.3.3"/>
    </reaction>
    <physiologicalReaction direction="left-to-right" evidence="5">
        <dbReference type="Rhea" id="RHEA:37584"/>
    </physiologicalReaction>
</comment>
<comment type="catalytic activity">
    <reaction evidence="5">
        <text>D-valine + O2 + H2O = 3-methyl-2-oxobutanoate + H2O2 + NH4(+)</text>
        <dbReference type="Rhea" id="RHEA:78203"/>
        <dbReference type="ChEBI" id="CHEBI:11851"/>
        <dbReference type="ChEBI" id="CHEBI:15377"/>
        <dbReference type="ChEBI" id="CHEBI:15379"/>
        <dbReference type="ChEBI" id="CHEBI:16240"/>
        <dbReference type="ChEBI" id="CHEBI:28938"/>
        <dbReference type="ChEBI" id="CHEBI:74338"/>
    </reaction>
    <physiologicalReaction direction="left-to-right" evidence="5">
        <dbReference type="Rhea" id="RHEA:78204"/>
    </physiologicalReaction>
</comment>
<comment type="catalytic activity">
    <reaction evidence="5">
        <text>D-histidine + O2 + H2O = 3-(imidazol-5-yl)pyruvate + H2O2 + NH4(+)</text>
        <dbReference type="Rhea" id="RHEA:78227"/>
        <dbReference type="ChEBI" id="CHEBI:15377"/>
        <dbReference type="ChEBI" id="CHEBI:15379"/>
        <dbReference type="ChEBI" id="CHEBI:16240"/>
        <dbReference type="ChEBI" id="CHEBI:28938"/>
        <dbReference type="ChEBI" id="CHEBI:58133"/>
        <dbReference type="ChEBI" id="CHEBI:142967"/>
    </reaction>
    <physiologicalReaction direction="left-to-right" evidence="5">
        <dbReference type="Rhea" id="RHEA:78228"/>
    </physiologicalReaction>
</comment>
<comment type="catalytic activity">
    <reaction evidence="5">
        <text>D-glutamine + O2 + H2O = 2-oxoglutaramate + H2O2 + NH4(+)</text>
        <dbReference type="Rhea" id="RHEA:78215"/>
        <dbReference type="ChEBI" id="CHEBI:15377"/>
        <dbReference type="ChEBI" id="CHEBI:15379"/>
        <dbReference type="ChEBI" id="CHEBI:16240"/>
        <dbReference type="ChEBI" id="CHEBI:16769"/>
        <dbReference type="ChEBI" id="CHEBI:28938"/>
        <dbReference type="ChEBI" id="CHEBI:58000"/>
    </reaction>
    <physiologicalReaction direction="left-to-right" evidence="5">
        <dbReference type="Rhea" id="RHEA:78216"/>
    </physiologicalReaction>
</comment>
<comment type="catalytic activity">
    <reaction evidence="5">
        <text>D-isoleucine + O2 + H2O = (R)-3-methyl-2-oxopentanoate + H2O2 + NH4(+)</text>
        <dbReference type="Rhea" id="RHEA:78235"/>
        <dbReference type="ChEBI" id="CHEBI:15377"/>
        <dbReference type="ChEBI" id="CHEBI:15379"/>
        <dbReference type="ChEBI" id="CHEBI:16240"/>
        <dbReference type="ChEBI" id="CHEBI:28938"/>
        <dbReference type="ChEBI" id="CHEBI:193151"/>
        <dbReference type="ChEBI" id="CHEBI:228255"/>
    </reaction>
    <physiologicalReaction direction="left-to-right" evidence="5">
        <dbReference type="Rhea" id="RHEA:78236"/>
    </physiologicalReaction>
</comment>
<comment type="catalytic activity">
    <reaction evidence="5">
        <text>D-allo-isoleucine + O2 + H2O = (S)-3-methyl-2-oxopentanoate + H2O2 + NH4(+)</text>
        <dbReference type="Rhea" id="RHEA:78223"/>
        <dbReference type="ChEBI" id="CHEBI:15377"/>
        <dbReference type="ChEBI" id="CHEBI:15379"/>
        <dbReference type="ChEBI" id="CHEBI:16240"/>
        <dbReference type="ChEBI" id="CHEBI:28938"/>
        <dbReference type="ChEBI" id="CHEBI:35146"/>
        <dbReference type="ChEBI" id="CHEBI:85306"/>
    </reaction>
    <physiologicalReaction direction="left-to-right" evidence="5">
        <dbReference type="Rhea" id="RHEA:78224"/>
    </physiologicalReaction>
</comment>
<comment type="catalytic activity">
    <reaction evidence="5">
        <text>D-threonine + O2 + H2O = (S)-3-hydroxy-2-oxobutanoate + H2O2 + NH4(+)</text>
        <dbReference type="Rhea" id="RHEA:78251"/>
        <dbReference type="ChEBI" id="CHEBI:15377"/>
        <dbReference type="ChEBI" id="CHEBI:15379"/>
        <dbReference type="ChEBI" id="CHEBI:16240"/>
        <dbReference type="ChEBI" id="CHEBI:28938"/>
        <dbReference type="ChEBI" id="CHEBI:57757"/>
        <dbReference type="ChEBI" id="CHEBI:228256"/>
    </reaction>
    <physiologicalReaction direction="left-to-right" evidence="5">
        <dbReference type="Rhea" id="RHEA:78252"/>
    </physiologicalReaction>
</comment>
<comment type="catalytic activity">
    <reaction evidence="5">
        <text>D-asparagine + O2 + H2O = 2-oxosuccinamate + H2O2 + NH4(+)</text>
        <dbReference type="Rhea" id="RHEA:78243"/>
        <dbReference type="ChEBI" id="CHEBI:15377"/>
        <dbReference type="ChEBI" id="CHEBI:15379"/>
        <dbReference type="ChEBI" id="CHEBI:16240"/>
        <dbReference type="ChEBI" id="CHEBI:28938"/>
        <dbReference type="ChEBI" id="CHEBI:57735"/>
        <dbReference type="ChEBI" id="CHEBI:74337"/>
    </reaction>
    <physiologicalReaction direction="left-to-right" evidence="5">
        <dbReference type="Rhea" id="RHEA:78244"/>
    </physiologicalReaction>
</comment>
<comment type="catalytic activity">
    <reaction evidence="5">
        <text>D-tryptophan + O2 + H2O = indole-3-pyruvate + H2O2 + NH4(+)</text>
        <dbReference type="Rhea" id="RHEA:78247"/>
        <dbReference type="ChEBI" id="CHEBI:15377"/>
        <dbReference type="ChEBI" id="CHEBI:15379"/>
        <dbReference type="ChEBI" id="CHEBI:16240"/>
        <dbReference type="ChEBI" id="CHEBI:17640"/>
        <dbReference type="ChEBI" id="CHEBI:28938"/>
        <dbReference type="ChEBI" id="CHEBI:57719"/>
    </reaction>
    <physiologicalReaction direction="left-to-right" evidence="5">
        <dbReference type="Rhea" id="RHEA:78248"/>
    </physiologicalReaction>
</comment>
<comment type="catalytic activity">
    <reaction evidence="5">
        <text>D-tyrosine + O2 + H2O = 3-(4-hydroxyphenyl)pyruvate + H2O2 + NH4(+)</text>
        <dbReference type="Rhea" id="RHEA:70959"/>
        <dbReference type="ChEBI" id="CHEBI:15377"/>
        <dbReference type="ChEBI" id="CHEBI:15379"/>
        <dbReference type="ChEBI" id="CHEBI:16240"/>
        <dbReference type="ChEBI" id="CHEBI:28938"/>
        <dbReference type="ChEBI" id="CHEBI:36242"/>
        <dbReference type="ChEBI" id="CHEBI:58570"/>
    </reaction>
    <physiologicalReaction direction="left-to-right" evidence="5">
        <dbReference type="Rhea" id="RHEA:70960"/>
    </physiologicalReaction>
</comment>
<comment type="cofactor">
    <cofactor evidence="5 6">
        <name>FAD</name>
        <dbReference type="ChEBI" id="CHEBI:57692"/>
    </cofactor>
</comment>
<comment type="activity regulation">
    <text evidence="5">Partially inhibited by benzoate, crotonate, and D-malate.</text>
</comment>
<comment type="biophysicochemical properties">
    <kinetics>
        <KM evidence="5">0.213 mM for D-methionine (at 55 degrees Celsius and at pH 8.0)</KM>
        <KM evidence="5">0.628 mM for D-valine (at 55 degrees Celsius and at pH 8.0)</KM>
        <KM evidence="5">2.7 mM for D-alanine (at 55 degrees Celsius and at pH 8.0)</KM>
        <KM evidence="5">12.1 mM for D-glutamate (at 55 degrees Celsius and at pH 8.0)</KM>
        <KM evidence="5">19.2 mM for D-arginine (at 55 degrees Celsius and at pH 8.0)</KM>
        <text evidence="5">kcat is 120 sec(-1) with D-methionine as substrate (at 55 degrees Celsius and at pH 8.0) (PubMed:31420577). kcat is 225 sec(-1) with D-valine as substrate (at 55 degrees Celsius and at pH 8.0) (PubMed:31420577). kcat is 189 sec(-1) with D-alanine as substrate (at 55 degrees Celsius and at pH 8.0) (PubMed:31420577). kcat is 90.7 sec(-1) with D-lutamic acid as substrate (at 55 degrees Celsius and at pH 8.0) (PubMed:31420577). kcat is 45.6 sec(-1) with D-arginine as substrate (at 55 degrees Celsius and at pH 8.0) (PubMed:31420577).</text>
    </kinetics>
    <phDependence>
        <text evidence="5">Optimum pH is 8.0.</text>
    </phDependence>
    <temperatureDependence>
        <text evidence="5">Optimum temperature is 55 degrees Celsius.</text>
    </temperatureDependence>
</comment>
<comment type="subunit">
    <text evidence="5 6">Homotetramer.</text>
</comment>
<comment type="subcellular location">
    <subcellularLocation>
        <location evidence="2">Peroxisome matrix</location>
    </subcellularLocation>
</comment>
<comment type="PTM">
    <text evidence="6">The disulfide bond might contribute to the high thermal stability of the protein.</text>
</comment>
<comment type="biotechnology">
    <text evidence="5">Capable of converting cephalosporin C (CPC) into 7-beta-(5-carboxy-5-oxopentanamido)-cephalosporinic acid, an initial material of different beta-lactam antibiotics.</text>
</comment>
<comment type="similarity">
    <text evidence="9">Belongs to the DAMOX/DASOX family.</text>
</comment>
<name>OXDA_TALEM</name>
<organism evidence="10">
    <name type="scientific">Talaromyces emersonii</name>
    <name type="common">Thermophilic fungus</name>
    <name type="synonym">Rasamsonia emersonii</name>
    <dbReference type="NCBI Taxonomy" id="68825"/>
    <lineage>
        <taxon>Eukaryota</taxon>
        <taxon>Fungi</taxon>
        <taxon>Dikarya</taxon>
        <taxon>Ascomycota</taxon>
        <taxon>Pezizomycotina</taxon>
        <taxon>Eurotiomycetes</taxon>
        <taxon>Eurotiomycetidae</taxon>
        <taxon>Eurotiales</taxon>
        <taxon>Trichocomaceae</taxon>
        <taxon>Rasamsonia</taxon>
    </lineage>
</organism>
<accession>A0A499UB99</accession>
<evidence type="ECO:0000250" key="1">
    <source>
        <dbReference type="UniProtKB" id="P80324"/>
    </source>
</evidence>
<evidence type="ECO:0000250" key="2">
    <source>
        <dbReference type="UniProtKB" id="Q9HGY3"/>
    </source>
</evidence>
<evidence type="ECO:0000250" key="3">
    <source>
        <dbReference type="UniProtKB" id="Q9Y7N4"/>
    </source>
</evidence>
<evidence type="ECO:0000255" key="4"/>
<evidence type="ECO:0000269" key="5">
    <source>
    </source>
</evidence>
<evidence type="ECO:0000269" key="6">
    <source>
    </source>
</evidence>
<evidence type="ECO:0000303" key="7">
    <source>
    </source>
</evidence>
<evidence type="ECO:0000303" key="8">
    <source>
    </source>
</evidence>
<evidence type="ECO:0000305" key="9"/>
<evidence type="ECO:0000312" key="10">
    <source>
        <dbReference type="EMBL" id="BBH51408.1"/>
    </source>
</evidence>
<evidence type="ECO:0007744" key="11">
    <source>
        <dbReference type="PDB" id="7CT4"/>
    </source>
</evidence>
<evidence type="ECO:0007829" key="12">
    <source>
        <dbReference type="PDB" id="7CT4"/>
    </source>
</evidence>
<protein>
    <recommendedName>
        <fullName evidence="7">D-amino-acid oxidase</fullName>
        <shortName evidence="7">DAAO</shortName>
        <shortName evidence="9">DAMOX</shortName>
        <shortName evidence="9">DAO</shortName>
        <ecNumber evidence="5">1.4.3.3</ecNumber>
    </recommendedName>
    <alternativeName>
        <fullName evidence="7">ReDAO</fullName>
    </alternativeName>
</protein>
<feature type="chain" id="PRO_0000460035" description="D-amino-acid oxidase">
    <location>
        <begin position="1"/>
        <end position="368"/>
    </location>
</feature>
<feature type="short sequence motif" description="Microbody targeting signal" evidence="4">
    <location>
        <begin position="366"/>
        <end position="368"/>
    </location>
</feature>
<feature type="binding site" evidence="6 11">
    <location>
        <position position="11"/>
    </location>
    <ligand>
        <name>FAD</name>
        <dbReference type="ChEBI" id="CHEBI:57692"/>
    </ligand>
</feature>
<feature type="binding site" evidence="6 11">
    <location>
        <position position="14"/>
    </location>
    <ligand>
        <name>FAD</name>
        <dbReference type="ChEBI" id="CHEBI:57692"/>
    </ligand>
</feature>
<feature type="binding site" evidence="6 11">
    <location>
        <position position="35"/>
    </location>
    <ligand>
        <name>FAD</name>
        <dbReference type="ChEBI" id="CHEBI:57692"/>
    </ligand>
</feature>
<feature type="binding site" evidence="6 11">
    <location>
        <position position="36"/>
    </location>
    <ligand>
        <name>FAD</name>
        <dbReference type="ChEBI" id="CHEBI:57692"/>
    </ligand>
</feature>
<feature type="binding site" evidence="6 11">
    <location>
        <position position="46"/>
    </location>
    <ligand>
        <name>FAD</name>
        <dbReference type="ChEBI" id="CHEBI:57692"/>
    </ligand>
</feature>
<feature type="binding site" evidence="6 11">
    <location>
        <position position="47"/>
    </location>
    <ligand>
        <name>FAD</name>
        <dbReference type="ChEBI" id="CHEBI:57692"/>
    </ligand>
</feature>
<feature type="binding site" evidence="1">
    <location>
        <position position="51"/>
    </location>
    <ligand>
        <name>FAD</name>
        <dbReference type="ChEBI" id="CHEBI:57692"/>
    </ligand>
</feature>
<feature type="binding site" evidence="6 11">
    <location>
        <position position="53"/>
    </location>
    <ligand>
        <name>FAD</name>
        <dbReference type="ChEBI" id="CHEBI:57692"/>
    </ligand>
</feature>
<feature type="binding site" evidence="6 11">
    <location>
        <position position="174"/>
    </location>
    <ligand>
        <name>FAD</name>
        <dbReference type="ChEBI" id="CHEBI:57692"/>
    </ligand>
</feature>
<feature type="binding site" evidence="1">
    <location>
        <position position="244"/>
    </location>
    <ligand>
        <name>(R)-lactate</name>
        <dbReference type="ChEBI" id="CHEBI:16004"/>
    </ligand>
</feature>
<feature type="binding site" evidence="1">
    <location>
        <position position="244"/>
    </location>
    <ligand>
        <name>anthranilate</name>
        <dbReference type="ChEBI" id="CHEBI:16567"/>
        <label>1</label>
    </ligand>
</feature>
<feature type="binding site" evidence="1">
    <location>
        <position position="260"/>
    </location>
    <ligand>
        <name>(R)-lactate</name>
        <dbReference type="ChEBI" id="CHEBI:16004"/>
    </ligand>
</feature>
<feature type="binding site" evidence="1">
    <location>
        <position position="260"/>
    </location>
    <ligand>
        <name>anthranilate</name>
        <dbReference type="ChEBI" id="CHEBI:16567"/>
        <label>2</label>
    </ligand>
</feature>
<feature type="binding site" evidence="1">
    <location>
        <position position="308"/>
    </location>
    <ligand>
        <name>(R)-lactate</name>
        <dbReference type="ChEBI" id="CHEBI:16004"/>
    </ligand>
</feature>
<feature type="binding site" evidence="1">
    <location>
        <position position="308"/>
    </location>
    <ligand>
        <name>anthranilate</name>
        <dbReference type="ChEBI" id="CHEBI:16567"/>
        <label>1</label>
    </ligand>
</feature>
<feature type="binding site" evidence="1">
    <location>
        <position position="308"/>
    </location>
    <ligand>
        <name>FAD</name>
        <dbReference type="ChEBI" id="CHEBI:57692"/>
    </ligand>
</feature>
<feature type="binding site" evidence="6 11">
    <location>
        <position position="334"/>
    </location>
    <ligand>
        <name>FAD</name>
        <dbReference type="ChEBI" id="CHEBI:57692"/>
    </ligand>
</feature>
<feature type="binding site" evidence="6 11">
    <location>
        <position position="337"/>
    </location>
    <ligand>
        <name>FAD</name>
        <dbReference type="ChEBI" id="CHEBI:57692"/>
    </ligand>
</feature>
<feature type="binding site" evidence="6 11">
    <location>
        <position position="338"/>
    </location>
    <ligand>
        <name>FAD</name>
        <dbReference type="ChEBI" id="CHEBI:57692"/>
    </ligand>
</feature>
<feature type="binding site" evidence="6 11">
    <location>
        <position position="339"/>
    </location>
    <ligand>
        <name>FAD</name>
        <dbReference type="ChEBI" id="CHEBI:57692"/>
    </ligand>
</feature>
<feature type="disulfide bond" evidence="6 11">
    <location>
        <begin position="230"/>
        <end position="285"/>
    </location>
</feature>
<feature type="strand" evidence="12">
    <location>
        <begin position="4"/>
        <end position="9"/>
    </location>
</feature>
<feature type="helix" evidence="12">
    <location>
        <begin position="13"/>
        <end position="22"/>
    </location>
</feature>
<feature type="strand" evidence="12">
    <location>
        <begin position="28"/>
        <end position="36"/>
    </location>
</feature>
<feature type="helix" evidence="12">
    <location>
        <begin position="47"/>
        <end position="49"/>
    </location>
</feature>
<feature type="helix" evidence="12">
    <location>
        <begin position="63"/>
        <end position="81"/>
    </location>
</feature>
<feature type="helix" evidence="12">
    <location>
        <begin position="83"/>
        <end position="85"/>
    </location>
</feature>
<feature type="strand" evidence="12">
    <location>
        <begin position="87"/>
        <end position="97"/>
    </location>
</feature>
<feature type="helix" evidence="12">
    <location>
        <begin position="118"/>
        <end position="121"/>
    </location>
</feature>
<feature type="turn" evidence="12">
    <location>
        <begin position="131"/>
        <end position="133"/>
    </location>
</feature>
<feature type="strand" evidence="12">
    <location>
        <begin position="138"/>
        <end position="149"/>
    </location>
</feature>
<feature type="helix" evidence="12">
    <location>
        <begin position="151"/>
        <end position="164"/>
    </location>
</feature>
<feature type="strand" evidence="12">
    <location>
        <begin position="168"/>
        <end position="171"/>
    </location>
</feature>
<feature type="helix" evidence="12">
    <location>
        <begin position="177"/>
        <end position="182"/>
    </location>
</feature>
<feature type="strand" evidence="12">
    <location>
        <begin position="191"/>
        <end position="195"/>
    </location>
</feature>
<feature type="helix" evidence="12">
    <location>
        <begin position="198"/>
        <end position="202"/>
    </location>
</feature>
<feature type="strand" evidence="12">
    <location>
        <begin position="212"/>
        <end position="223"/>
    </location>
</feature>
<feature type="strand" evidence="12">
    <location>
        <begin position="227"/>
        <end position="233"/>
    </location>
</feature>
<feature type="strand" evidence="12">
    <location>
        <begin position="241"/>
        <end position="247"/>
    </location>
</feature>
<feature type="turn" evidence="12">
    <location>
        <begin position="249"/>
        <end position="251"/>
    </location>
</feature>
<feature type="strand" evidence="12">
    <location>
        <begin position="254"/>
        <end position="259"/>
    </location>
</feature>
<feature type="helix" evidence="12">
    <location>
        <begin position="271"/>
        <end position="284"/>
    </location>
</feature>
<feature type="helix" evidence="12">
    <location>
        <begin position="286"/>
        <end position="288"/>
    </location>
</feature>
<feature type="helix" evidence="12">
    <location>
        <begin position="295"/>
        <end position="297"/>
    </location>
</feature>
<feature type="strand" evidence="12">
    <location>
        <begin position="300"/>
        <end position="311"/>
    </location>
</feature>
<feature type="strand" evidence="12">
    <location>
        <begin position="319"/>
        <end position="322"/>
    </location>
</feature>
<feature type="strand" evidence="12">
    <location>
        <begin position="325"/>
        <end position="329"/>
    </location>
</feature>
<feature type="turn" evidence="12">
    <location>
        <begin position="337"/>
        <end position="340"/>
    </location>
</feature>
<feature type="helix" evidence="12">
    <location>
        <begin position="341"/>
        <end position="356"/>
    </location>
</feature>
<dbReference type="EC" id="1.4.3.3" evidence="5"/>
<dbReference type="EMBL" id="LC436777">
    <property type="protein sequence ID" value="BBH51408.1"/>
    <property type="molecule type" value="Genomic_DNA"/>
</dbReference>
<dbReference type="PDB" id="7CT4">
    <property type="method" value="X-ray"/>
    <property type="resolution" value="2.00 A"/>
    <property type="chains" value="A/B/C/D=1-368"/>
</dbReference>
<dbReference type="PDBsum" id="7CT4"/>
<dbReference type="SMR" id="A0A499UB99"/>
<dbReference type="GO" id="GO:0005782">
    <property type="term" value="C:peroxisomal matrix"/>
    <property type="evidence" value="ECO:0000250"/>
    <property type="project" value="UniProtKB"/>
</dbReference>
<dbReference type="GO" id="GO:0003884">
    <property type="term" value="F:D-amino-acid oxidase activity"/>
    <property type="evidence" value="ECO:0000314"/>
    <property type="project" value="UniProtKB"/>
</dbReference>
<dbReference type="GO" id="GO:0071949">
    <property type="term" value="F:FAD binding"/>
    <property type="evidence" value="ECO:0000314"/>
    <property type="project" value="UniProtKB"/>
</dbReference>
<dbReference type="GO" id="GO:0019478">
    <property type="term" value="P:D-amino acid catabolic process"/>
    <property type="evidence" value="ECO:0007669"/>
    <property type="project" value="TreeGrafter"/>
</dbReference>
<dbReference type="GO" id="GO:0046416">
    <property type="term" value="P:D-amino acid metabolic process"/>
    <property type="evidence" value="ECO:0000314"/>
    <property type="project" value="UniProtKB"/>
</dbReference>
<dbReference type="GO" id="GO:0019740">
    <property type="term" value="P:nitrogen utilization"/>
    <property type="evidence" value="ECO:0000250"/>
    <property type="project" value="UniProtKB"/>
</dbReference>
<dbReference type="FunFam" id="3.30.9.10:FF:000018">
    <property type="entry name" value="D-amino acid oxidase, putative"/>
    <property type="match status" value="1"/>
</dbReference>
<dbReference type="Gene3D" id="3.30.9.10">
    <property type="entry name" value="D-Amino Acid Oxidase, subunit A, domain 2"/>
    <property type="match status" value="1"/>
</dbReference>
<dbReference type="Gene3D" id="3.40.50.720">
    <property type="entry name" value="NAD(P)-binding Rossmann-like Domain"/>
    <property type="match status" value="1"/>
</dbReference>
<dbReference type="InterPro" id="IPR006181">
    <property type="entry name" value="D-amino_acid_oxidase_CS"/>
</dbReference>
<dbReference type="InterPro" id="IPR023209">
    <property type="entry name" value="DAO"/>
</dbReference>
<dbReference type="InterPro" id="IPR006076">
    <property type="entry name" value="FAD-dep_OxRdtase"/>
</dbReference>
<dbReference type="PANTHER" id="PTHR11530">
    <property type="entry name" value="D-AMINO ACID OXIDASE"/>
    <property type="match status" value="1"/>
</dbReference>
<dbReference type="PANTHER" id="PTHR11530:SF16">
    <property type="entry name" value="D-AMINO ACID OXIDASE (AFU_ORTHOLOGUE AFUA_5G11290)"/>
    <property type="match status" value="1"/>
</dbReference>
<dbReference type="Pfam" id="PF01266">
    <property type="entry name" value="DAO"/>
    <property type="match status" value="1"/>
</dbReference>
<dbReference type="PIRSF" id="PIRSF000189">
    <property type="entry name" value="D-aa_oxidase"/>
    <property type="match status" value="1"/>
</dbReference>
<dbReference type="SUPFAM" id="SSF54373">
    <property type="entry name" value="FAD-linked reductases, C-terminal domain"/>
    <property type="match status" value="1"/>
</dbReference>
<dbReference type="SUPFAM" id="SSF51971">
    <property type="entry name" value="Nucleotide-binding domain"/>
    <property type="match status" value="1"/>
</dbReference>
<dbReference type="PROSITE" id="PS00677">
    <property type="entry name" value="DAO"/>
    <property type="match status" value="1"/>
</dbReference>
<proteinExistence type="evidence at protein level"/>
<keyword id="KW-0002">3D-structure</keyword>
<keyword id="KW-1015">Disulfide bond</keyword>
<keyword id="KW-0274">FAD</keyword>
<keyword id="KW-0285">Flavoprotein</keyword>
<keyword id="KW-0560">Oxidoreductase</keyword>
<keyword id="KW-0576">Peroxisome</keyword>
<gene>
    <name evidence="3" type="primary">DAO1</name>
</gene>
<reference evidence="9" key="1">
    <citation type="journal article" date="2019" name="Sci. Rep.">
        <title>A novel thermostable D-amino acid oxidase of the thermophilic fungus Rasamsonia emersonii strain YA.</title>
        <authorList>
            <person name="Shimekake Y."/>
            <person name="Furuichi T."/>
            <person name="Abe K."/>
            <person name="Kera Y."/>
            <person name="Takahashi S."/>
        </authorList>
    </citation>
    <scope>NUCLEOTIDE SEQUENCE [GENOMIC DNA]</scope>
    <scope>FUNCTION</scope>
    <scope>CATALYTIC ACTIVITY</scope>
    <scope>COFACTOR</scope>
    <scope>ACTIVITY REGULATION</scope>
    <scope>BIOPHYSICOCHEMICAL PROPERTIES</scope>
    <scope>SUBUNIT</scope>
    <scope>BIOTECHNOLOGY</scope>
    <source>
        <strain evidence="7">YA</strain>
    </source>
</reference>
<reference evidence="11" key="2">
    <citation type="journal article" date="2020" name="Acta Crystallogr. F Struct. Biol. Commun.">
        <title>X-ray structure analysis of a unique D-amino-acid oxidase from the thermophilic fungus Rasamsonia emersonii strain YA.</title>
        <authorList>
            <person name="Shimekake Y."/>
            <person name="Hirato Y."/>
            <person name="Funabashi R."/>
            <person name="Okazaki S."/>
            <person name="Goto M."/>
            <person name="Furuichi T."/>
            <person name="Suzuki H."/>
            <person name="Kera Y."/>
            <person name="Takahashi S."/>
        </authorList>
    </citation>
    <scope>X-RAY CRYSTALLOGRAPHY (2.00 ANGSTROMS) IN COMPLEX WITH FAD</scope>
    <scope>COFACTOR</scope>
    <scope>SUBUNIT</scope>
    <scope>DISULFIDE BONDS</scope>
    <source>
        <strain evidence="8">YA</strain>
    </source>
</reference>